<feature type="chain" id="PRO_0000256142" description="Bridging integrator 2">
    <location>
        <begin position="1"/>
        <end position="476"/>
    </location>
</feature>
<feature type="domain" description="BAR" evidence="2">
    <location>
        <begin position="26"/>
        <end position="242"/>
    </location>
</feature>
<feature type="region of interest" description="Disordered" evidence="3">
    <location>
        <begin position="269"/>
        <end position="369"/>
    </location>
</feature>
<feature type="region of interest" description="Disordered" evidence="3">
    <location>
        <begin position="395"/>
        <end position="476"/>
    </location>
</feature>
<feature type="compositionally biased region" description="Polar residues" evidence="3">
    <location>
        <begin position="279"/>
        <end position="292"/>
    </location>
</feature>
<feature type="compositionally biased region" description="Pro residues" evidence="3">
    <location>
        <begin position="310"/>
        <end position="324"/>
    </location>
</feature>
<feature type="compositionally biased region" description="Low complexity" evidence="3">
    <location>
        <begin position="325"/>
        <end position="339"/>
    </location>
</feature>
<feature type="compositionally biased region" description="Basic and acidic residues" evidence="3">
    <location>
        <begin position="340"/>
        <end position="353"/>
    </location>
</feature>
<feature type="compositionally biased region" description="Polar residues" evidence="3">
    <location>
        <begin position="461"/>
        <end position="476"/>
    </location>
</feature>
<keyword id="KW-0175">Coiled coil</keyword>
<keyword id="KW-0963">Cytoplasm</keyword>
<keyword id="KW-1185">Reference proteome</keyword>
<name>BIN2_CHICK</name>
<evidence type="ECO:0000250" key="1"/>
<evidence type="ECO:0000255" key="2">
    <source>
        <dbReference type="PROSITE-ProRule" id="PRU00361"/>
    </source>
</evidence>
<evidence type="ECO:0000256" key="3">
    <source>
        <dbReference type="SAM" id="MobiDB-lite"/>
    </source>
</evidence>
<organism>
    <name type="scientific">Gallus gallus</name>
    <name type="common">Chicken</name>
    <dbReference type="NCBI Taxonomy" id="9031"/>
    <lineage>
        <taxon>Eukaryota</taxon>
        <taxon>Metazoa</taxon>
        <taxon>Chordata</taxon>
        <taxon>Craniata</taxon>
        <taxon>Vertebrata</taxon>
        <taxon>Euteleostomi</taxon>
        <taxon>Archelosauria</taxon>
        <taxon>Archosauria</taxon>
        <taxon>Dinosauria</taxon>
        <taxon>Saurischia</taxon>
        <taxon>Theropoda</taxon>
        <taxon>Coelurosauria</taxon>
        <taxon>Aves</taxon>
        <taxon>Neognathae</taxon>
        <taxon>Galloanserae</taxon>
        <taxon>Galliformes</taxon>
        <taxon>Phasianidae</taxon>
        <taxon>Phasianinae</taxon>
        <taxon>Gallus</taxon>
    </lineage>
</organism>
<dbReference type="EMBL" id="AJ720067">
    <property type="protein sequence ID" value="CAG31726.1"/>
    <property type="molecule type" value="mRNA"/>
</dbReference>
<dbReference type="RefSeq" id="NP_001074365.1">
    <property type="nucleotide sequence ID" value="NM_001080896.2"/>
</dbReference>
<dbReference type="SMR" id="Q5ZKL7"/>
<dbReference type="FunCoup" id="Q5ZKL7">
    <property type="interactions" value="18"/>
</dbReference>
<dbReference type="STRING" id="9031.ENSGALP00000051641"/>
<dbReference type="PaxDb" id="9031-ENSGALP00000042254"/>
<dbReference type="GeneID" id="777552"/>
<dbReference type="KEGG" id="gga:777552"/>
<dbReference type="CTD" id="51411"/>
<dbReference type="VEuPathDB" id="HostDB:geneid_777552"/>
<dbReference type="eggNOG" id="KOG3771">
    <property type="taxonomic scope" value="Eukaryota"/>
</dbReference>
<dbReference type="InParanoid" id="Q5ZKL7"/>
<dbReference type="OrthoDB" id="446293at2759"/>
<dbReference type="PhylomeDB" id="Q5ZKL7"/>
<dbReference type="PRO" id="PR:Q5ZKL7"/>
<dbReference type="Proteomes" id="UP000000539">
    <property type="component" value="Unassembled WGS sequence"/>
</dbReference>
<dbReference type="GO" id="GO:0005737">
    <property type="term" value="C:cytoplasm"/>
    <property type="evidence" value="ECO:0007669"/>
    <property type="project" value="UniProtKB-SubCell"/>
</dbReference>
<dbReference type="GO" id="GO:0005886">
    <property type="term" value="C:plasma membrane"/>
    <property type="evidence" value="ECO:0000318"/>
    <property type="project" value="GO_Central"/>
</dbReference>
<dbReference type="GO" id="GO:0002102">
    <property type="term" value="C:podosome"/>
    <property type="evidence" value="ECO:0000318"/>
    <property type="project" value="GO_Central"/>
</dbReference>
<dbReference type="GO" id="GO:0005543">
    <property type="term" value="F:phospholipid binding"/>
    <property type="evidence" value="ECO:0000318"/>
    <property type="project" value="GO_Central"/>
</dbReference>
<dbReference type="GO" id="GO:0006911">
    <property type="term" value="P:phagocytosis, engulfment"/>
    <property type="evidence" value="ECO:0000318"/>
    <property type="project" value="GO_Central"/>
</dbReference>
<dbReference type="GO" id="GO:0097320">
    <property type="term" value="P:plasma membrane tubulation"/>
    <property type="evidence" value="ECO:0000318"/>
    <property type="project" value="GO_Central"/>
</dbReference>
<dbReference type="GO" id="GO:0071800">
    <property type="term" value="P:podosome assembly"/>
    <property type="evidence" value="ECO:0000318"/>
    <property type="project" value="GO_Central"/>
</dbReference>
<dbReference type="CDD" id="cd07612">
    <property type="entry name" value="BAR_Bin2"/>
    <property type="match status" value="1"/>
</dbReference>
<dbReference type="FunFam" id="1.20.1270.60:FF:000167">
    <property type="entry name" value="Bridging integrator 2"/>
    <property type="match status" value="1"/>
</dbReference>
<dbReference type="Gene3D" id="1.20.1270.60">
    <property type="entry name" value="Arfaptin homology (AH) domain/BAR domain"/>
    <property type="match status" value="1"/>
</dbReference>
<dbReference type="InterPro" id="IPR027267">
    <property type="entry name" value="AH/BAR_dom_sf"/>
</dbReference>
<dbReference type="InterPro" id="IPR003005">
    <property type="entry name" value="Amphiphysin"/>
</dbReference>
<dbReference type="InterPro" id="IPR046984">
    <property type="entry name" value="BAR_Bin2"/>
</dbReference>
<dbReference type="InterPro" id="IPR004148">
    <property type="entry name" value="BAR_dom"/>
</dbReference>
<dbReference type="PANTHER" id="PTHR46514">
    <property type="entry name" value="AMPHIPHYSIN"/>
    <property type="match status" value="1"/>
</dbReference>
<dbReference type="PANTHER" id="PTHR46514:SF1">
    <property type="entry name" value="BRIDGING INTEGRATOR 2"/>
    <property type="match status" value="1"/>
</dbReference>
<dbReference type="Pfam" id="PF03114">
    <property type="entry name" value="BAR"/>
    <property type="match status" value="1"/>
</dbReference>
<dbReference type="PRINTS" id="PR01251">
    <property type="entry name" value="AMPHIPHYSIN"/>
</dbReference>
<dbReference type="SMART" id="SM00721">
    <property type="entry name" value="BAR"/>
    <property type="match status" value="1"/>
</dbReference>
<dbReference type="SUPFAM" id="SSF103657">
    <property type="entry name" value="BAR/IMD domain-like"/>
    <property type="match status" value="1"/>
</dbReference>
<dbReference type="PROSITE" id="PS51021">
    <property type="entry name" value="BAR"/>
    <property type="match status" value="1"/>
</dbReference>
<accession>Q5ZKL7</accession>
<reference key="1">
    <citation type="journal article" date="2005" name="Genome Biol.">
        <title>Full-length cDNAs from chicken bursal lymphocytes to facilitate gene function analysis.</title>
        <authorList>
            <person name="Caldwell R.B."/>
            <person name="Kierzek A.M."/>
            <person name="Arakawa H."/>
            <person name="Bezzubov Y."/>
            <person name="Zaim J."/>
            <person name="Fiedler P."/>
            <person name="Kutter S."/>
            <person name="Blagodatski A."/>
            <person name="Kostovska D."/>
            <person name="Koter M."/>
            <person name="Plachy J."/>
            <person name="Carninci P."/>
            <person name="Hayashizaki Y."/>
            <person name="Buerstedde J.-M."/>
        </authorList>
    </citation>
    <scope>NUCLEOTIDE SEQUENCE [LARGE SCALE MRNA]</scope>
    <source>
        <strain>CB</strain>
        <tissue>Bursa of Fabricius</tissue>
    </source>
</reference>
<proteinExistence type="evidence at transcript level"/>
<gene>
    <name type="primary">BIN2</name>
    <name type="ORF">RCJMB04_10b19</name>
</gene>
<protein>
    <recommendedName>
        <fullName>Bridging integrator 2</fullName>
    </recommendedName>
</protein>
<sequence>MAEGKSGAGLFAKQVQKHFSRAQEKVLQKLGKTVETKDEQFEQSAYNFQLQQNEGNKLYKDLKAFVGAVKVMHESSRKVAETLQEIYSTEWDGHVELKAIADSNDLLWDDYEAKLGDQALRLMENYLAQFGDIKERIAKRGRKLVDYDSARHHLEALQNAKKKDEAKIAKAEEEFNRAQVVFEELNRELREELPVLYGSRIACYVTIFQNISNLRDIFYKEMSKLNRDLYEVMGKLDKQHSSKVFIIKGVPSKRRSLLISAPVSPPAAYPCPGKAPNWEPSSGAEQTPTSPRVGSDATEDVPNGLAAPGPAEPGAPMPGPPPASPTSVRSASESESECSGESREIDLSPKEMEVSAGSGCPEYPKTEGAAKGEVEGIAASMASMIVSEAIAAATGAAPGDSDGVGGGDSTDSEISPAEGAWGGPSPGGSEERVEGTDVSPEVGSDAGPCEHGTPEPPEQDVSCNPPQDPSESLTPL</sequence>
<comment type="subcellular location">
    <subcellularLocation>
        <location evidence="1">Cytoplasm</location>
    </subcellularLocation>
</comment>